<accession>Q9HCL0</accession>
<accession>A8K7K3</accession>
<accession>B7ZKT1</accession>
<accession>Q52LS2</accession>
<comment type="function">
    <text>Potential calcium-dependent cell-adhesion protein.</text>
</comment>
<comment type="subunit">
    <text evidence="1">Interacts with DAB1.</text>
</comment>
<comment type="interaction">
    <interactant intactId="EBI-2949740">
        <id>Q9HCL0</id>
    </interactant>
    <interactant intactId="EBI-741480">
        <id>Q9UMX0</id>
        <label>UBQLN1</label>
    </interactant>
    <organismsDiffer>false</organismsDiffer>
    <experiments>6</experiments>
</comment>
<comment type="subcellular location">
    <subcellularLocation>
        <location evidence="1">Cell membrane</location>
        <topology evidence="1">Single-pass type I membrane protein</topology>
    </subcellularLocation>
</comment>
<comment type="alternative products">
    <event type="alternative splicing"/>
    <isoform>
        <id>Q9HCL0-1</id>
        <name>1</name>
        <sequence type="displayed"/>
    </isoform>
    <isoform>
        <id>Q9HCL0-2</id>
        <name>2</name>
        <sequence type="described" ref="VSP_035648"/>
    </isoform>
</comment>
<comment type="tissue specificity">
    <text evidence="5">Expressed in all tissues, with highest expression in lung and ovary.</text>
</comment>
<comment type="sequence caution" evidence="8">
    <conflict type="erroneous initiation">
        <sequence resource="EMBL-CDS" id="BAB13388"/>
    </conflict>
</comment>
<feature type="signal peptide" evidence="2">
    <location>
        <begin position="1"/>
        <end position="27"/>
    </location>
</feature>
<feature type="chain" id="PRO_0000004002" description="Protocadherin-18">
    <location>
        <begin position="28"/>
        <end position="1135"/>
    </location>
</feature>
<feature type="topological domain" description="Extracellular" evidence="2">
    <location>
        <begin position="28"/>
        <end position="699"/>
    </location>
</feature>
<feature type="transmembrane region" description="Helical" evidence="2">
    <location>
        <begin position="700"/>
        <end position="720"/>
    </location>
</feature>
<feature type="topological domain" description="Cytoplasmic" evidence="2">
    <location>
        <begin position="721"/>
        <end position="1135"/>
    </location>
</feature>
<feature type="domain" description="Cadherin 1" evidence="3">
    <location>
        <begin position="28"/>
        <end position="137"/>
    </location>
</feature>
<feature type="domain" description="Cadherin 2" evidence="3">
    <location>
        <begin position="138"/>
        <end position="246"/>
    </location>
</feature>
<feature type="domain" description="Cadherin 3" evidence="3">
    <location>
        <begin position="247"/>
        <end position="354"/>
    </location>
</feature>
<feature type="domain" description="Cadherin 4" evidence="3">
    <location>
        <begin position="361"/>
        <end position="465"/>
    </location>
</feature>
<feature type="domain" description="Cadherin 5" evidence="3">
    <location>
        <begin position="466"/>
        <end position="576"/>
    </location>
</feature>
<feature type="domain" description="Cadherin 6" evidence="3">
    <location>
        <begin position="582"/>
        <end position="688"/>
    </location>
</feature>
<feature type="region of interest" description="Disordered" evidence="4">
    <location>
        <begin position="769"/>
        <end position="800"/>
    </location>
</feature>
<feature type="region of interest" description="Disordered" evidence="4">
    <location>
        <begin position="869"/>
        <end position="889"/>
    </location>
</feature>
<feature type="region of interest" description="Interaction with DAB1" evidence="1">
    <location>
        <begin position="893"/>
        <end position="1135"/>
    </location>
</feature>
<feature type="region of interest" description="Disordered" evidence="4">
    <location>
        <begin position="942"/>
        <end position="1003"/>
    </location>
</feature>
<feature type="region of interest" description="Disordered" evidence="4">
    <location>
        <begin position="1023"/>
        <end position="1046"/>
    </location>
</feature>
<feature type="compositionally biased region" description="Polar residues" evidence="4">
    <location>
        <begin position="791"/>
        <end position="800"/>
    </location>
</feature>
<feature type="compositionally biased region" description="Basic and acidic residues" evidence="4">
    <location>
        <begin position="869"/>
        <end position="878"/>
    </location>
</feature>
<feature type="compositionally biased region" description="Basic and acidic residues" evidence="4">
    <location>
        <begin position="1028"/>
        <end position="1039"/>
    </location>
</feature>
<feature type="glycosylation site" description="N-linked (GlcNAc...) asparagine" evidence="2">
    <location>
        <position position="103"/>
    </location>
</feature>
<feature type="glycosylation site" description="N-linked (GlcNAc...) asparagine" evidence="2">
    <location>
        <position position="269"/>
    </location>
</feature>
<feature type="glycosylation site" description="N-linked (GlcNAc...) asparagine" evidence="2">
    <location>
        <position position="420"/>
    </location>
</feature>
<feature type="glycosylation site" description="N-linked (GlcNAc...) asparagine" evidence="2">
    <location>
        <position position="559"/>
    </location>
</feature>
<feature type="glycosylation site" description="N-linked (GlcNAc...) asparagine" evidence="2">
    <location>
        <position position="583"/>
    </location>
</feature>
<feature type="glycosylation site" description="N-linked (GlcNAc...) asparagine" evidence="2">
    <location>
        <position position="641"/>
    </location>
</feature>
<feature type="splice variant" id="VSP_035648" description="In isoform 2." evidence="6 7">
    <location>
        <position position="830"/>
    </location>
</feature>
<feature type="strand" evidence="9">
    <location>
        <begin position="29"/>
        <end position="35"/>
    </location>
</feature>
<feature type="strand" evidence="9">
    <location>
        <begin position="43"/>
        <end position="46"/>
    </location>
</feature>
<feature type="helix" evidence="9">
    <location>
        <begin position="47"/>
        <end position="50"/>
    </location>
</feature>
<feature type="helix" evidence="9">
    <location>
        <begin position="52"/>
        <end position="55"/>
    </location>
</feature>
<feature type="strand" evidence="9">
    <location>
        <begin position="58"/>
        <end position="60"/>
    </location>
</feature>
<feature type="helix" evidence="9">
    <location>
        <begin position="61"/>
        <end position="63"/>
    </location>
</feature>
<feature type="strand" evidence="9">
    <location>
        <begin position="65"/>
        <end position="69"/>
    </location>
</feature>
<feature type="strand" evidence="9">
    <location>
        <begin position="76"/>
        <end position="79"/>
    </location>
</feature>
<feature type="turn" evidence="9">
    <location>
        <begin position="81"/>
        <end position="83"/>
    </location>
</feature>
<feature type="strand" evidence="9">
    <location>
        <begin position="85"/>
        <end position="88"/>
    </location>
</feature>
<feature type="helix" evidence="9">
    <location>
        <begin position="94"/>
        <end position="98"/>
    </location>
</feature>
<feature type="strand" evidence="9">
    <location>
        <begin position="105"/>
        <end position="115"/>
    </location>
</feature>
<feature type="strand" evidence="9">
    <location>
        <begin position="120"/>
        <end position="128"/>
    </location>
</feature>
<feature type="strand" evidence="9">
    <location>
        <begin position="140"/>
        <end position="147"/>
    </location>
</feature>
<feature type="strand" evidence="9">
    <location>
        <begin position="155"/>
        <end position="157"/>
    </location>
</feature>
<feature type="helix" evidence="9">
    <location>
        <begin position="167"/>
        <end position="169"/>
    </location>
</feature>
<feature type="strand" evidence="9">
    <location>
        <begin position="170"/>
        <end position="176"/>
    </location>
</feature>
<feature type="strand" evidence="9">
    <location>
        <begin position="180"/>
        <end position="188"/>
    </location>
</feature>
<feature type="strand" evidence="9">
    <location>
        <begin position="194"/>
        <end position="200"/>
    </location>
</feature>
<feature type="turn" evidence="9">
    <location>
        <begin position="206"/>
        <end position="208"/>
    </location>
</feature>
<feature type="strand" evidence="9">
    <location>
        <begin position="211"/>
        <end position="220"/>
    </location>
</feature>
<feature type="strand" evidence="9">
    <location>
        <begin position="227"/>
        <end position="237"/>
    </location>
</feature>
<feature type="strand" evidence="9">
    <location>
        <begin position="245"/>
        <end position="247"/>
    </location>
</feature>
<feature type="strand" evidence="9">
    <location>
        <begin position="249"/>
        <end position="256"/>
    </location>
</feature>
<feature type="strand" evidence="9">
    <location>
        <begin position="264"/>
        <end position="267"/>
    </location>
</feature>
<feature type="helix" evidence="9">
    <location>
        <begin position="276"/>
        <end position="279"/>
    </location>
</feature>
<feature type="strand" evidence="9">
    <location>
        <begin position="281"/>
        <end position="285"/>
    </location>
</feature>
<feature type="helix" evidence="9">
    <location>
        <begin position="291"/>
        <end position="296"/>
    </location>
</feature>
<feature type="strand" evidence="9">
    <location>
        <begin position="297"/>
        <end position="299"/>
    </location>
</feature>
<feature type="turn" evidence="9">
    <location>
        <begin position="301"/>
        <end position="303"/>
    </location>
</feature>
<feature type="strand" evidence="9">
    <location>
        <begin position="305"/>
        <end position="310"/>
    </location>
</feature>
<feature type="turn" evidence="9">
    <location>
        <begin position="314"/>
        <end position="316"/>
    </location>
</feature>
<feature type="strand" evidence="9">
    <location>
        <begin position="319"/>
        <end position="330"/>
    </location>
</feature>
<feature type="strand" evidence="9">
    <location>
        <begin position="336"/>
        <end position="345"/>
    </location>
</feature>
<feature type="strand" evidence="9">
    <location>
        <begin position="353"/>
        <end position="357"/>
    </location>
</feature>
<feature type="strand" evidence="9">
    <location>
        <begin position="380"/>
        <end position="385"/>
    </location>
</feature>
<feature type="helix" evidence="9">
    <location>
        <begin position="390"/>
        <end position="393"/>
    </location>
</feature>
<feature type="strand" evidence="9">
    <location>
        <begin position="395"/>
        <end position="399"/>
    </location>
</feature>
<feature type="strand" evidence="9">
    <location>
        <begin position="405"/>
        <end position="411"/>
    </location>
</feature>
<feature type="strand" evidence="9">
    <location>
        <begin position="414"/>
        <end position="419"/>
    </location>
</feature>
<feature type="turn" evidence="9">
    <location>
        <begin position="425"/>
        <end position="427"/>
    </location>
</feature>
<feature type="strand" evidence="9">
    <location>
        <begin position="430"/>
        <end position="440"/>
    </location>
</feature>
<feature type="strand" evidence="9">
    <location>
        <begin position="446"/>
        <end position="454"/>
    </location>
</feature>
<proteinExistence type="evidence at protein level"/>
<reference key="1">
    <citation type="journal article" date="2000" name="DNA Res.">
        <title>Prediction of the coding sequences of unidentified human genes. XVIII. The complete sequences of 100 new cDNA clones from brain which code for large proteins in vitro.</title>
        <authorList>
            <person name="Nagase T."/>
            <person name="Kikuno R."/>
            <person name="Nakayama M."/>
            <person name="Hirosawa M."/>
            <person name="Ohara O."/>
        </authorList>
    </citation>
    <scope>NUCLEOTIDE SEQUENCE [LARGE SCALE MRNA] (ISOFORM 1)</scope>
    <source>
        <tissue>Brain</tissue>
    </source>
</reference>
<reference key="2">
    <citation type="journal article" date="2004" name="Nat. Genet.">
        <title>Complete sequencing and characterization of 21,243 full-length human cDNAs.</title>
        <authorList>
            <person name="Ota T."/>
            <person name="Suzuki Y."/>
            <person name="Nishikawa T."/>
            <person name="Otsuki T."/>
            <person name="Sugiyama T."/>
            <person name="Irie R."/>
            <person name="Wakamatsu A."/>
            <person name="Hayashi K."/>
            <person name="Sato H."/>
            <person name="Nagai K."/>
            <person name="Kimura K."/>
            <person name="Makita H."/>
            <person name="Sekine M."/>
            <person name="Obayashi M."/>
            <person name="Nishi T."/>
            <person name="Shibahara T."/>
            <person name="Tanaka T."/>
            <person name="Ishii S."/>
            <person name="Yamamoto J."/>
            <person name="Saito K."/>
            <person name="Kawai Y."/>
            <person name="Isono Y."/>
            <person name="Nakamura Y."/>
            <person name="Nagahari K."/>
            <person name="Murakami K."/>
            <person name="Yasuda T."/>
            <person name="Iwayanagi T."/>
            <person name="Wagatsuma M."/>
            <person name="Shiratori A."/>
            <person name="Sudo H."/>
            <person name="Hosoiri T."/>
            <person name="Kaku Y."/>
            <person name="Kodaira H."/>
            <person name="Kondo H."/>
            <person name="Sugawara M."/>
            <person name="Takahashi M."/>
            <person name="Kanda K."/>
            <person name="Yokoi T."/>
            <person name="Furuya T."/>
            <person name="Kikkawa E."/>
            <person name="Omura Y."/>
            <person name="Abe K."/>
            <person name="Kamihara K."/>
            <person name="Katsuta N."/>
            <person name="Sato K."/>
            <person name="Tanikawa M."/>
            <person name="Yamazaki M."/>
            <person name="Ninomiya K."/>
            <person name="Ishibashi T."/>
            <person name="Yamashita H."/>
            <person name="Murakawa K."/>
            <person name="Fujimori K."/>
            <person name="Tanai H."/>
            <person name="Kimata M."/>
            <person name="Watanabe M."/>
            <person name="Hiraoka S."/>
            <person name="Chiba Y."/>
            <person name="Ishida S."/>
            <person name="Ono Y."/>
            <person name="Takiguchi S."/>
            <person name="Watanabe S."/>
            <person name="Yosida M."/>
            <person name="Hotuta T."/>
            <person name="Kusano J."/>
            <person name="Kanehori K."/>
            <person name="Takahashi-Fujii A."/>
            <person name="Hara H."/>
            <person name="Tanase T.-O."/>
            <person name="Nomura Y."/>
            <person name="Togiya S."/>
            <person name="Komai F."/>
            <person name="Hara R."/>
            <person name="Takeuchi K."/>
            <person name="Arita M."/>
            <person name="Imose N."/>
            <person name="Musashino K."/>
            <person name="Yuuki H."/>
            <person name="Oshima A."/>
            <person name="Sasaki N."/>
            <person name="Aotsuka S."/>
            <person name="Yoshikawa Y."/>
            <person name="Matsunawa H."/>
            <person name="Ichihara T."/>
            <person name="Shiohata N."/>
            <person name="Sano S."/>
            <person name="Moriya S."/>
            <person name="Momiyama H."/>
            <person name="Satoh N."/>
            <person name="Takami S."/>
            <person name="Terashima Y."/>
            <person name="Suzuki O."/>
            <person name="Nakagawa S."/>
            <person name="Senoh A."/>
            <person name="Mizoguchi H."/>
            <person name="Goto Y."/>
            <person name="Shimizu F."/>
            <person name="Wakebe H."/>
            <person name="Hishigaki H."/>
            <person name="Watanabe T."/>
            <person name="Sugiyama A."/>
            <person name="Takemoto M."/>
            <person name="Kawakami B."/>
            <person name="Yamazaki M."/>
            <person name="Watanabe K."/>
            <person name="Kumagai A."/>
            <person name="Itakura S."/>
            <person name="Fukuzumi Y."/>
            <person name="Fujimori Y."/>
            <person name="Komiyama M."/>
            <person name="Tashiro H."/>
            <person name="Tanigami A."/>
            <person name="Fujiwara T."/>
            <person name="Ono T."/>
            <person name="Yamada K."/>
            <person name="Fujii Y."/>
            <person name="Ozaki K."/>
            <person name="Hirao M."/>
            <person name="Ohmori Y."/>
            <person name="Kawabata A."/>
            <person name="Hikiji T."/>
            <person name="Kobatake N."/>
            <person name="Inagaki H."/>
            <person name="Ikema Y."/>
            <person name="Okamoto S."/>
            <person name="Okitani R."/>
            <person name="Kawakami T."/>
            <person name="Noguchi S."/>
            <person name="Itoh T."/>
            <person name="Shigeta K."/>
            <person name="Senba T."/>
            <person name="Matsumura K."/>
            <person name="Nakajima Y."/>
            <person name="Mizuno T."/>
            <person name="Morinaga M."/>
            <person name="Sasaki M."/>
            <person name="Togashi T."/>
            <person name="Oyama M."/>
            <person name="Hata H."/>
            <person name="Watanabe M."/>
            <person name="Komatsu T."/>
            <person name="Mizushima-Sugano J."/>
            <person name="Satoh T."/>
            <person name="Shirai Y."/>
            <person name="Takahashi Y."/>
            <person name="Nakagawa K."/>
            <person name="Okumura K."/>
            <person name="Nagase T."/>
            <person name="Nomura N."/>
            <person name="Kikuchi H."/>
            <person name="Masuho Y."/>
            <person name="Yamashita R."/>
            <person name="Nakai K."/>
            <person name="Yada T."/>
            <person name="Nakamura Y."/>
            <person name="Ohara O."/>
            <person name="Isogai T."/>
            <person name="Sugano S."/>
        </authorList>
    </citation>
    <scope>NUCLEOTIDE SEQUENCE [LARGE SCALE MRNA] (ISOFORM 2)</scope>
    <source>
        <tissue>Spleen</tissue>
    </source>
</reference>
<reference key="3">
    <citation type="journal article" date="2005" name="Nature">
        <title>Generation and annotation of the DNA sequences of human chromosomes 2 and 4.</title>
        <authorList>
            <person name="Hillier L.W."/>
            <person name="Graves T.A."/>
            <person name="Fulton R.S."/>
            <person name="Fulton L.A."/>
            <person name="Pepin K.H."/>
            <person name="Minx P."/>
            <person name="Wagner-McPherson C."/>
            <person name="Layman D."/>
            <person name="Wylie K."/>
            <person name="Sekhon M."/>
            <person name="Becker M.C."/>
            <person name="Fewell G.A."/>
            <person name="Delehaunty K.D."/>
            <person name="Miner T.L."/>
            <person name="Nash W.E."/>
            <person name="Kremitzki C."/>
            <person name="Oddy L."/>
            <person name="Du H."/>
            <person name="Sun H."/>
            <person name="Bradshaw-Cordum H."/>
            <person name="Ali J."/>
            <person name="Carter J."/>
            <person name="Cordes M."/>
            <person name="Harris A."/>
            <person name="Isak A."/>
            <person name="van Brunt A."/>
            <person name="Nguyen C."/>
            <person name="Du F."/>
            <person name="Courtney L."/>
            <person name="Kalicki J."/>
            <person name="Ozersky P."/>
            <person name="Abbott S."/>
            <person name="Armstrong J."/>
            <person name="Belter E.A."/>
            <person name="Caruso L."/>
            <person name="Cedroni M."/>
            <person name="Cotton M."/>
            <person name="Davidson T."/>
            <person name="Desai A."/>
            <person name="Elliott G."/>
            <person name="Erb T."/>
            <person name="Fronick C."/>
            <person name="Gaige T."/>
            <person name="Haakenson W."/>
            <person name="Haglund K."/>
            <person name="Holmes A."/>
            <person name="Harkins R."/>
            <person name="Kim K."/>
            <person name="Kruchowski S.S."/>
            <person name="Strong C.M."/>
            <person name="Grewal N."/>
            <person name="Goyea E."/>
            <person name="Hou S."/>
            <person name="Levy A."/>
            <person name="Martinka S."/>
            <person name="Mead K."/>
            <person name="McLellan M.D."/>
            <person name="Meyer R."/>
            <person name="Randall-Maher J."/>
            <person name="Tomlinson C."/>
            <person name="Dauphin-Kohlberg S."/>
            <person name="Kozlowicz-Reilly A."/>
            <person name="Shah N."/>
            <person name="Swearengen-Shahid S."/>
            <person name="Snider J."/>
            <person name="Strong J.T."/>
            <person name="Thompson J."/>
            <person name="Yoakum M."/>
            <person name="Leonard S."/>
            <person name="Pearman C."/>
            <person name="Trani L."/>
            <person name="Radionenko M."/>
            <person name="Waligorski J.E."/>
            <person name="Wang C."/>
            <person name="Rock S.M."/>
            <person name="Tin-Wollam A.-M."/>
            <person name="Maupin R."/>
            <person name="Latreille P."/>
            <person name="Wendl M.C."/>
            <person name="Yang S.-P."/>
            <person name="Pohl C."/>
            <person name="Wallis J.W."/>
            <person name="Spieth J."/>
            <person name="Bieri T.A."/>
            <person name="Berkowicz N."/>
            <person name="Nelson J.O."/>
            <person name="Osborne J."/>
            <person name="Ding L."/>
            <person name="Meyer R."/>
            <person name="Sabo A."/>
            <person name="Shotland Y."/>
            <person name="Sinha P."/>
            <person name="Wohldmann P.E."/>
            <person name="Cook L.L."/>
            <person name="Hickenbotham M.T."/>
            <person name="Eldred J."/>
            <person name="Williams D."/>
            <person name="Jones T.A."/>
            <person name="She X."/>
            <person name="Ciccarelli F.D."/>
            <person name="Izaurralde E."/>
            <person name="Taylor J."/>
            <person name="Schmutz J."/>
            <person name="Myers R.M."/>
            <person name="Cox D.R."/>
            <person name="Huang X."/>
            <person name="McPherson J.D."/>
            <person name="Mardis E.R."/>
            <person name="Clifton S.W."/>
            <person name="Warren W.C."/>
            <person name="Chinwalla A.T."/>
            <person name="Eddy S.R."/>
            <person name="Marra M.A."/>
            <person name="Ovcharenko I."/>
            <person name="Furey T.S."/>
            <person name="Miller W."/>
            <person name="Eichler E.E."/>
            <person name="Bork P."/>
            <person name="Suyama M."/>
            <person name="Torrents D."/>
            <person name="Waterston R.H."/>
            <person name="Wilson R.K."/>
        </authorList>
    </citation>
    <scope>NUCLEOTIDE SEQUENCE [LARGE SCALE GENOMIC DNA]</scope>
</reference>
<reference key="4">
    <citation type="journal article" date="2004" name="Genome Res.">
        <title>The status, quality, and expansion of the NIH full-length cDNA project: the Mammalian Gene Collection (MGC).</title>
        <authorList>
            <consortium name="The MGC Project Team"/>
        </authorList>
    </citation>
    <scope>NUCLEOTIDE SEQUENCE [LARGE SCALE MRNA] (ISOFORMS 1 AND 2)</scope>
    <source>
        <tissue>Colon</tissue>
    </source>
</reference>
<reference key="5">
    <citation type="journal article" date="2001" name="Genomics">
        <title>Identification and characterization of three members of a novel subclass of protocadherins.</title>
        <authorList>
            <person name="Wolverton T."/>
            <person name="Lalande M."/>
        </authorList>
    </citation>
    <scope>GENE STRUCTURE</scope>
    <scope>TISSUE SPECIFICITY</scope>
</reference>
<name>PCD18_HUMAN</name>
<evidence type="ECO:0000250" key="1"/>
<evidence type="ECO:0000255" key="2"/>
<evidence type="ECO:0000255" key="3">
    <source>
        <dbReference type="PROSITE-ProRule" id="PRU00043"/>
    </source>
</evidence>
<evidence type="ECO:0000256" key="4">
    <source>
        <dbReference type="SAM" id="MobiDB-lite"/>
    </source>
</evidence>
<evidence type="ECO:0000269" key="5">
    <source>
    </source>
</evidence>
<evidence type="ECO:0000303" key="6">
    <source>
    </source>
</evidence>
<evidence type="ECO:0000303" key="7">
    <source>
    </source>
</evidence>
<evidence type="ECO:0000305" key="8"/>
<evidence type="ECO:0007829" key="9">
    <source>
        <dbReference type="PDB" id="6VFR"/>
    </source>
</evidence>
<keyword id="KW-0002">3D-structure</keyword>
<keyword id="KW-0025">Alternative splicing</keyword>
<keyword id="KW-0106">Calcium</keyword>
<keyword id="KW-0130">Cell adhesion</keyword>
<keyword id="KW-1003">Cell membrane</keyword>
<keyword id="KW-0325">Glycoprotein</keyword>
<keyword id="KW-0472">Membrane</keyword>
<keyword id="KW-1267">Proteomics identification</keyword>
<keyword id="KW-1185">Reference proteome</keyword>
<keyword id="KW-0677">Repeat</keyword>
<keyword id="KW-0732">Signal</keyword>
<keyword id="KW-0812">Transmembrane</keyword>
<keyword id="KW-1133">Transmembrane helix</keyword>
<gene>
    <name type="primary">PCDH18</name>
    <name type="synonym">KIAA1562</name>
</gene>
<sequence>MHQMNAKMHFRFVFALLIVSFNHDVLGKNLKYRIYEEQRVGSVIARLSEDVADVLLKLPNPSTVRFRAMQRGNSPLLVVNEDNGEISIGATIDREQLCQKNLNCSIEFDVITLPTEHLQLFHIEVEVLDINDNSPQFSRSLIPIEISESAAVGTRIPLDSAFDPDVGENSLHTYSLSANDFFNIEVRTRTDGAKYAELIVVRELDRELKSSYELQLTASDMGVPQRSGSSILKISISDSNDNSPAFEQQSYIIQLLENSPVGTLLLDLNATDPDEGANGKIVYSFSSHVSPKIMETFKIDSERGHLTLFKQVDYEITKSYEIDVQAQDLGPNSIPAHCKIIIKVVDVNDNKPEININLMSPGKEEISYIFEGDPIDTFVALVRVQDKDSGLNGEIVCKLHGHGHFKLQKTYENNYLILTNATLDREKRSEYSLTVIAEDRGTPSLSTVKHFTVQINDINDNPPHFQRSRYEFVISENNSPGAYITTVTATDPDLGENGQVTYTILESFILGSSITTYVTIDPSNGAIYALRIFDHEEVSQITFVVEARDGGSPKQLVSNTTVVLTIIDENDNVPVVIGPALRNNTAEITIPKGAESGFHVTRIRAIDRDSGVNAELSCAIVAGNEENIFIIDPRSCDIHTNVSMDSVPYTEWELSVIIQDKGNPQLHTKVLLKCMIFEYAESVTSTAMTSVSQASLDVSMIIIISLGAICAVLLVIMVLFATRCNREKKDTRSYNCRVAESTYQHHPKRPSRQIHKGDITLVPTINGTLPIRSHHRSSPSSSPTLERGQMGSRQSHNSHQSLNSLVTISSNHVPENFSLELTHATPAVEQVSQLLSMLHQGQYQPRPSFRGNKYSRSYRYALQDMDKFSLKDSGRGDSEAGDSDYDLGRDSPIDRLLGEGFSDLFLTDGRIPAAMRLCTEECRVLGHSDQCWMPPLPSPSSDYRSNMFIPGEEFPTQPQQQHPHQSLEDDAQPADSGEKKKSFSTFGKDSPNDEDTGDTSTSSLLSEMSSVFQRLLPPSLDTYSECSEVDRSNSLERRKGPLPAKTVGYPQGVAAWAASTHFQNPTTNCGPPLGTHSSVQPSSKWLPAMEEIPENYEEDDFDNVLNHLNDGKHELMDASELVAEINKLLQDVRQS</sequence>
<dbReference type="EMBL" id="AB046782">
    <property type="protein sequence ID" value="BAB13388.1"/>
    <property type="status" value="ALT_INIT"/>
    <property type="molecule type" value="mRNA"/>
</dbReference>
<dbReference type="EMBL" id="AK292018">
    <property type="protein sequence ID" value="BAF84707.1"/>
    <property type="molecule type" value="mRNA"/>
</dbReference>
<dbReference type="EMBL" id="AC142278">
    <property type="status" value="NOT_ANNOTATED_CDS"/>
    <property type="molecule type" value="Genomic_DNA"/>
</dbReference>
<dbReference type="EMBL" id="AC144556">
    <property type="status" value="NOT_ANNOTATED_CDS"/>
    <property type="molecule type" value="Genomic_DNA"/>
</dbReference>
<dbReference type="EMBL" id="BC093815">
    <property type="protein sequence ID" value="AAH93815.1"/>
    <property type="molecule type" value="mRNA"/>
</dbReference>
<dbReference type="EMBL" id="BC143361">
    <property type="protein sequence ID" value="AAI43362.1"/>
    <property type="molecule type" value="mRNA"/>
</dbReference>
<dbReference type="CCDS" id="CCDS34064.1">
    <molecule id="Q9HCL0-1"/>
</dbReference>
<dbReference type="CCDS" id="CCDS75193.1">
    <molecule id="Q9HCL0-2"/>
</dbReference>
<dbReference type="RefSeq" id="NP_001287757.1">
    <molecule id="Q9HCL0-2"/>
    <property type="nucleotide sequence ID" value="NM_001300828.2"/>
</dbReference>
<dbReference type="RefSeq" id="NP_061908.1">
    <molecule id="Q9HCL0-1"/>
    <property type="nucleotide sequence ID" value="NM_019035.5"/>
</dbReference>
<dbReference type="PDB" id="6VFR">
    <property type="method" value="X-ray"/>
    <property type="resolution" value="2.79 A"/>
    <property type="chains" value="A/B=28-457"/>
</dbReference>
<dbReference type="PDBsum" id="6VFR"/>
<dbReference type="SMR" id="Q9HCL0"/>
<dbReference type="BioGRID" id="120005">
    <property type="interactions" value="13"/>
</dbReference>
<dbReference type="FunCoup" id="Q9HCL0">
    <property type="interactions" value="217"/>
</dbReference>
<dbReference type="IntAct" id="Q9HCL0">
    <property type="interactions" value="12"/>
</dbReference>
<dbReference type="MINT" id="Q9HCL0"/>
<dbReference type="STRING" id="9606.ENSP00000355082"/>
<dbReference type="GlyCosmos" id="Q9HCL0">
    <property type="glycosylation" value="6 sites, No reported glycans"/>
</dbReference>
<dbReference type="GlyGen" id="Q9HCL0">
    <property type="glycosylation" value="6 sites, 1 N-linked glycan (1 site)"/>
</dbReference>
<dbReference type="iPTMnet" id="Q9HCL0"/>
<dbReference type="PhosphoSitePlus" id="Q9HCL0"/>
<dbReference type="BioMuta" id="PCDH18"/>
<dbReference type="DMDM" id="212276496"/>
<dbReference type="jPOST" id="Q9HCL0"/>
<dbReference type="MassIVE" id="Q9HCL0"/>
<dbReference type="PaxDb" id="9606-ENSP00000355082"/>
<dbReference type="PeptideAtlas" id="Q9HCL0"/>
<dbReference type="ProteomicsDB" id="81750">
    <molecule id="Q9HCL0-1"/>
</dbReference>
<dbReference type="ProteomicsDB" id="81751">
    <molecule id="Q9HCL0-2"/>
</dbReference>
<dbReference type="Antibodypedia" id="2719">
    <property type="antibodies" value="98 antibodies from 22 providers"/>
</dbReference>
<dbReference type="DNASU" id="54510"/>
<dbReference type="Ensembl" id="ENST00000344876.9">
    <molecule id="Q9HCL0-1"/>
    <property type="protein sequence ID" value="ENSP00000355082.4"/>
    <property type="gene ID" value="ENSG00000189184.12"/>
</dbReference>
<dbReference type="Ensembl" id="ENST00000412923.6">
    <molecule id="Q9HCL0-2"/>
    <property type="protein sequence ID" value="ENSP00000390688.2"/>
    <property type="gene ID" value="ENSG00000189184.12"/>
</dbReference>
<dbReference type="GeneID" id="54510"/>
<dbReference type="KEGG" id="hsa:54510"/>
<dbReference type="MANE-Select" id="ENST00000344876.9">
    <property type="protein sequence ID" value="ENSP00000355082.4"/>
    <property type="RefSeq nucleotide sequence ID" value="NM_019035.5"/>
    <property type="RefSeq protein sequence ID" value="NP_061908.1"/>
</dbReference>
<dbReference type="UCSC" id="uc003ihe.5">
    <molecule id="Q9HCL0-1"/>
    <property type="organism name" value="human"/>
</dbReference>
<dbReference type="AGR" id="HGNC:14268"/>
<dbReference type="CTD" id="54510"/>
<dbReference type="DisGeNET" id="54510"/>
<dbReference type="GeneCards" id="PCDH18"/>
<dbReference type="HGNC" id="HGNC:14268">
    <property type="gene designation" value="PCDH18"/>
</dbReference>
<dbReference type="HPA" id="ENSG00000189184">
    <property type="expression patterns" value="Low tissue specificity"/>
</dbReference>
<dbReference type="MIM" id="608287">
    <property type="type" value="gene"/>
</dbReference>
<dbReference type="neXtProt" id="NX_Q9HCL0"/>
<dbReference type="OpenTargets" id="ENSG00000189184"/>
<dbReference type="PharmGKB" id="PA33002"/>
<dbReference type="VEuPathDB" id="HostDB:ENSG00000189184"/>
<dbReference type="eggNOG" id="KOG3594">
    <property type="taxonomic scope" value="Eukaryota"/>
</dbReference>
<dbReference type="GeneTree" id="ENSGT00940000156295"/>
<dbReference type="HOGENOM" id="CLU_006480_1_2_1"/>
<dbReference type="InParanoid" id="Q9HCL0"/>
<dbReference type="OMA" id="PHTEWEL"/>
<dbReference type="OrthoDB" id="6252479at2759"/>
<dbReference type="PAN-GO" id="Q9HCL0">
    <property type="GO annotations" value="2 GO annotations based on evolutionary models"/>
</dbReference>
<dbReference type="PhylomeDB" id="Q9HCL0"/>
<dbReference type="TreeFam" id="TF352008"/>
<dbReference type="PathwayCommons" id="Q9HCL0"/>
<dbReference type="SignaLink" id="Q9HCL0"/>
<dbReference type="BioGRID-ORCS" id="54510">
    <property type="hits" value="12 hits in 1138 CRISPR screens"/>
</dbReference>
<dbReference type="ChiTaRS" id="PCDH18">
    <property type="organism name" value="human"/>
</dbReference>
<dbReference type="GeneWiki" id="PCDH18"/>
<dbReference type="GenomeRNAi" id="54510"/>
<dbReference type="Pharos" id="Q9HCL0">
    <property type="development level" value="Tbio"/>
</dbReference>
<dbReference type="PRO" id="PR:Q9HCL0"/>
<dbReference type="Proteomes" id="UP000005640">
    <property type="component" value="Chromosome 4"/>
</dbReference>
<dbReference type="RNAct" id="Q9HCL0">
    <property type="molecule type" value="protein"/>
</dbReference>
<dbReference type="Bgee" id="ENSG00000189184">
    <property type="expression patterns" value="Expressed in stromal cell of endometrium and 177 other cell types or tissues"/>
</dbReference>
<dbReference type="ExpressionAtlas" id="Q9HCL0">
    <property type="expression patterns" value="baseline and differential"/>
</dbReference>
<dbReference type="GO" id="GO:0005886">
    <property type="term" value="C:plasma membrane"/>
    <property type="evidence" value="ECO:0000318"/>
    <property type="project" value="GO_Central"/>
</dbReference>
<dbReference type="GO" id="GO:0005509">
    <property type="term" value="F:calcium ion binding"/>
    <property type="evidence" value="ECO:0007669"/>
    <property type="project" value="InterPro"/>
</dbReference>
<dbReference type="GO" id="GO:0007420">
    <property type="term" value="P:brain development"/>
    <property type="evidence" value="ECO:0000250"/>
    <property type="project" value="UniProtKB"/>
</dbReference>
<dbReference type="GO" id="GO:0007155">
    <property type="term" value="P:cell adhesion"/>
    <property type="evidence" value="ECO:0000318"/>
    <property type="project" value="GO_Central"/>
</dbReference>
<dbReference type="GO" id="GO:0007156">
    <property type="term" value="P:homophilic cell adhesion via plasma membrane adhesion molecules"/>
    <property type="evidence" value="ECO:0007669"/>
    <property type="project" value="InterPro"/>
</dbReference>
<dbReference type="CDD" id="cd11304">
    <property type="entry name" value="Cadherin_repeat"/>
    <property type="match status" value="6"/>
</dbReference>
<dbReference type="FunFam" id="2.60.40.60:FF:000001">
    <property type="entry name" value="Protocadherin alpha 2"/>
    <property type="match status" value="1"/>
</dbReference>
<dbReference type="FunFam" id="2.60.40.60:FF:000002">
    <property type="entry name" value="Protocadherin alpha 2"/>
    <property type="match status" value="1"/>
</dbReference>
<dbReference type="FunFam" id="2.60.40.60:FF:000003">
    <property type="entry name" value="Protocadherin alpha 2"/>
    <property type="match status" value="1"/>
</dbReference>
<dbReference type="FunFam" id="2.60.40.60:FF:000007">
    <property type="entry name" value="Protocadherin alpha 2"/>
    <property type="match status" value="1"/>
</dbReference>
<dbReference type="FunFam" id="2.60.40.60:FF:000103">
    <property type="entry name" value="protocadherin-18 isoform X2"/>
    <property type="match status" value="1"/>
</dbReference>
<dbReference type="FunFam" id="2.60.40.60:FF:000133">
    <property type="entry name" value="protocadherin-18 isoform X2"/>
    <property type="match status" value="1"/>
</dbReference>
<dbReference type="Gene3D" id="2.60.40.60">
    <property type="entry name" value="Cadherins"/>
    <property type="match status" value="6"/>
</dbReference>
<dbReference type="InterPro" id="IPR002126">
    <property type="entry name" value="Cadherin-like_dom"/>
</dbReference>
<dbReference type="InterPro" id="IPR015919">
    <property type="entry name" value="Cadherin-like_sf"/>
</dbReference>
<dbReference type="InterPro" id="IPR020894">
    <property type="entry name" value="Cadherin_CS"/>
</dbReference>
<dbReference type="InterPro" id="IPR013164">
    <property type="entry name" value="Cadherin_N"/>
</dbReference>
<dbReference type="InterPro" id="IPR050174">
    <property type="entry name" value="Protocadherin/Cadherin-CA"/>
</dbReference>
<dbReference type="PANTHER" id="PTHR24028">
    <property type="entry name" value="CADHERIN-87A"/>
    <property type="match status" value="1"/>
</dbReference>
<dbReference type="PANTHER" id="PTHR24028:SF9">
    <property type="entry name" value="PROTOCADHERIN-18"/>
    <property type="match status" value="1"/>
</dbReference>
<dbReference type="Pfam" id="PF00028">
    <property type="entry name" value="Cadherin"/>
    <property type="match status" value="5"/>
</dbReference>
<dbReference type="Pfam" id="PF08266">
    <property type="entry name" value="Cadherin_2"/>
    <property type="match status" value="1"/>
</dbReference>
<dbReference type="PRINTS" id="PR00205">
    <property type="entry name" value="CADHERIN"/>
</dbReference>
<dbReference type="SMART" id="SM00112">
    <property type="entry name" value="CA"/>
    <property type="match status" value="6"/>
</dbReference>
<dbReference type="SUPFAM" id="SSF49313">
    <property type="entry name" value="Cadherin-like"/>
    <property type="match status" value="5"/>
</dbReference>
<dbReference type="PROSITE" id="PS00232">
    <property type="entry name" value="CADHERIN_1"/>
    <property type="match status" value="5"/>
</dbReference>
<dbReference type="PROSITE" id="PS50268">
    <property type="entry name" value="CADHERIN_2"/>
    <property type="match status" value="6"/>
</dbReference>
<protein>
    <recommendedName>
        <fullName>Protocadherin-18</fullName>
    </recommendedName>
</protein>
<organism>
    <name type="scientific">Homo sapiens</name>
    <name type="common">Human</name>
    <dbReference type="NCBI Taxonomy" id="9606"/>
    <lineage>
        <taxon>Eukaryota</taxon>
        <taxon>Metazoa</taxon>
        <taxon>Chordata</taxon>
        <taxon>Craniata</taxon>
        <taxon>Vertebrata</taxon>
        <taxon>Euteleostomi</taxon>
        <taxon>Mammalia</taxon>
        <taxon>Eutheria</taxon>
        <taxon>Euarchontoglires</taxon>
        <taxon>Primates</taxon>
        <taxon>Haplorrhini</taxon>
        <taxon>Catarrhini</taxon>
        <taxon>Hominidae</taxon>
        <taxon>Homo</taxon>
    </lineage>
</organism>